<protein>
    <recommendedName>
        <fullName evidence="1">Holo-[acyl-carrier-protein] synthase</fullName>
        <shortName evidence="1">Holo-ACP synthase</shortName>
        <ecNumber evidence="1">2.7.8.7</ecNumber>
    </recommendedName>
    <alternativeName>
        <fullName evidence="1">4'-phosphopantetheinyl transferase AcpS</fullName>
    </alternativeName>
</protein>
<keyword id="KW-0963">Cytoplasm</keyword>
<keyword id="KW-0275">Fatty acid biosynthesis</keyword>
<keyword id="KW-0276">Fatty acid metabolism</keyword>
<keyword id="KW-0444">Lipid biosynthesis</keyword>
<keyword id="KW-0443">Lipid metabolism</keyword>
<keyword id="KW-0460">Magnesium</keyword>
<keyword id="KW-0479">Metal-binding</keyword>
<keyword id="KW-0808">Transferase</keyword>
<gene>
    <name evidence="1" type="primary">acpS</name>
    <name type="ordered locus">YPK_1193</name>
</gene>
<name>ACPS_YERPY</name>
<comment type="function">
    <text evidence="1">Transfers the 4'-phosphopantetheine moiety from coenzyme A to a Ser of acyl-carrier-protein.</text>
</comment>
<comment type="catalytic activity">
    <reaction evidence="1">
        <text>apo-[ACP] + CoA = holo-[ACP] + adenosine 3',5'-bisphosphate + H(+)</text>
        <dbReference type="Rhea" id="RHEA:12068"/>
        <dbReference type="Rhea" id="RHEA-COMP:9685"/>
        <dbReference type="Rhea" id="RHEA-COMP:9690"/>
        <dbReference type="ChEBI" id="CHEBI:15378"/>
        <dbReference type="ChEBI" id="CHEBI:29999"/>
        <dbReference type="ChEBI" id="CHEBI:57287"/>
        <dbReference type="ChEBI" id="CHEBI:58343"/>
        <dbReference type="ChEBI" id="CHEBI:64479"/>
        <dbReference type="EC" id="2.7.8.7"/>
    </reaction>
</comment>
<comment type="cofactor">
    <cofactor evidence="1">
        <name>Mg(2+)</name>
        <dbReference type="ChEBI" id="CHEBI:18420"/>
    </cofactor>
</comment>
<comment type="subcellular location">
    <subcellularLocation>
        <location evidence="1">Cytoplasm</location>
    </subcellularLocation>
</comment>
<comment type="similarity">
    <text evidence="1">Belongs to the P-Pant transferase superfamily. AcpS family.</text>
</comment>
<accession>B1JRD1</accession>
<dbReference type="EC" id="2.7.8.7" evidence="1"/>
<dbReference type="EMBL" id="CP000950">
    <property type="protein sequence ID" value="ACA67491.1"/>
    <property type="molecule type" value="Genomic_DNA"/>
</dbReference>
<dbReference type="RefSeq" id="WP_011192825.1">
    <property type="nucleotide sequence ID" value="NZ_CP009792.1"/>
</dbReference>
<dbReference type="SMR" id="B1JRD1"/>
<dbReference type="GeneID" id="49785104"/>
<dbReference type="KEGG" id="ypy:YPK_1193"/>
<dbReference type="PATRIC" id="fig|502800.11.peg.1828"/>
<dbReference type="GO" id="GO:0005737">
    <property type="term" value="C:cytoplasm"/>
    <property type="evidence" value="ECO:0007669"/>
    <property type="project" value="UniProtKB-SubCell"/>
</dbReference>
<dbReference type="GO" id="GO:0008897">
    <property type="term" value="F:holo-[acyl-carrier-protein] synthase activity"/>
    <property type="evidence" value="ECO:0007669"/>
    <property type="project" value="UniProtKB-UniRule"/>
</dbReference>
<dbReference type="GO" id="GO:0000287">
    <property type="term" value="F:magnesium ion binding"/>
    <property type="evidence" value="ECO:0007669"/>
    <property type="project" value="UniProtKB-UniRule"/>
</dbReference>
<dbReference type="GO" id="GO:0006633">
    <property type="term" value="P:fatty acid biosynthetic process"/>
    <property type="evidence" value="ECO:0007669"/>
    <property type="project" value="UniProtKB-UniRule"/>
</dbReference>
<dbReference type="FunFam" id="3.90.470.20:FF:000001">
    <property type="entry name" value="Holo-[acyl-carrier-protein] synthase"/>
    <property type="match status" value="1"/>
</dbReference>
<dbReference type="Gene3D" id="3.90.470.20">
    <property type="entry name" value="4'-phosphopantetheinyl transferase domain"/>
    <property type="match status" value="1"/>
</dbReference>
<dbReference type="HAMAP" id="MF_00101">
    <property type="entry name" value="AcpS"/>
    <property type="match status" value="1"/>
</dbReference>
<dbReference type="InterPro" id="IPR008278">
    <property type="entry name" value="4-PPantetheinyl_Trfase_dom"/>
</dbReference>
<dbReference type="InterPro" id="IPR037143">
    <property type="entry name" value="4-PPantetheinyl_Trfase_dom_sf"/>
</dbReference>
<dbReference type="InterPro" id="IPR002582">
    <property type="entry name" value="ACPS"/>
</dbReference>
<dbReference type="InterPro" id="IPR004568">
    <property type="entry name" value="Ppantetheine-prot_Trfase_dom"/>
</dbReference>
<dbReference type="NCBIfam" id="TIGR00516">
    <property type="entry name" value="acpS"/>
    <property type="match status" value="1"/>
</dbReference>
<dbReference type="NCBIfam" id="TIGR00556">
    <property type="entry name" value="pantethn_trn"/>
    <property type="match status" value="1"/>
</dbReference>
<dbReference type="Pfam" id="PF01648">
    <property type="entry name" value="ACPS"/>
    <property type="match status" value="1"/>
</dbReference>
<dbReference type="SUPFAM" id="SSF56214">
    <property type="entry name" value="4'-phosphopantetheinyl transferase"/>
    <property type="match status" value="1"/>
</dbReference>
<reference key="1">
    <citation type="submission" date="2008-02" db="EMBL/GenBank/DDBJ databases">
        <title>Complete sequence of Yersinia pseudotuberculosis YPIII.</title>
        <authorList>
            <consortium name="US DOE Joint Genome Institute"/>
            <person name="Copeland A."/>
            <person name="Lucas S."/>
            <person name="Lapidus A."/>
            <person name="Glavina del Rio T."/>
            <person name="Dalin E."/>
            <person name="Tice H."/>
            <person name="Bruce D."/>
            <person name="Goodwin L."/>
            <person name="Pitluck S."/>
            <person name="Munk A.C."/>
            <person name="Brettin T."/>
            <person name="Detter J.C."/>
            <person name="Han C."/>
            <person name="Tapia R."/>
            <person name="Schmutz J."/>
            <person name="Larimer F."/>
            <person name="Land M."/>
            <person name="Hauser L."/>
            <person name="Challacombe J.F."/>
            <person name="Green L."/>
            <person name="Lindler L.E."/>
            <person name="Nikolich M.P."/>
            <person name="Richardson P."/>
        </authorList>
    </citation>
    <scope>NUCLEOTIDE SEQUENCE [LARGE SCALE GENOMIC DNA]</scope>
    <source>
        <strain>YPIII</strain>
    </source>
</reference>
<evidence type="ECO:0000255" key="1">
    <source>
        <dbReference type="HAMAP-Rule" id="MF_00101"/>
    </source>
</evidence>
<sequence length="126" mass="13993">MAILGLGTDIVEISRIEAVVERTGERLARRILSPSEWQHYQQHQQPVRFLAKRFAVKEAAAKAFGTGIRNGLAFNQFEVVNDALGKPTLRLHSRAAELAVELGVKSLHVTLADERRYACATVIIES</sequence>
<proteinExistence type="inferred from homology"/>
<organism>
    <name type="scientific">Yersinia pseudotuberculosis serotype O:3 (strain YPIII)</name>
    <dbReference type="NCBI Taxonomy" id="502800"/>
    <lineage>
        <taxon>Bacteria</taxon>
        <taxon>Pseudomonadati</taxon>
        <taxon>Pseudomonadota</taxon>
        <taxon>Gammaproteobacteria</taxon>
        <taxon>Enterobacterales</taxon>
        <taxon>Yersiniaceae</taxon>
        <taxon>Yersinia</taxon>
    </lineage>
</organism>
<feature type="chain" id="PRO_1000093933" description="Holo-[acyl-carrier-protein] synthase">
    <location>
        <begin position="1"/>
        <end position="126"/>
    </location>
</feature>
<feature type="binding site" evidence="1">
    <location>
        <position position="9"/>
    </location>
    <ligand>
        <name>Mg(2+)</name>
        <dbReference type="ChEBI" id="CHEBI:18420"/>
    </ligand>
</feature>
<feature type="binding site" evidence="1">
    <location>
        <position position="58"/>
    </location>
    <ligand>
        <name>Mg(2+)</name>
        <dbReference type="ChEBI" id="CHEBI:18420"/>
    </ligand>
</feature>